<organism>
    <name type="scientific">Legionella pneumophila (strain Corby)</name>
    <dbReference type="NCBI Taxonomy" id="400673"/>
    <lineage>
        <taxon>Bacteria</taxon>
        <taxon>Pseudomonadati</taxon>
        <taxon>Pseudomonadota</taxon>
        <taxon>Gammaproteobacteria</taxon>
        <taxon>Legionellales</taxon>
        <taxon>Legionellaceae</taxon>
        <taxon>Legionella</taxon>
    </lineage>
</organism>
<name>RS4_LEGPC</name>
<keyword id="KW-0687">Ribonucleoprotein</keyword>
<keyword id="KW-0689">Ribosomal protein</keyword>
<keyword id="KW-0694">RNA-binding</keyword>
<keyword id="KW-0699">rRNA-binding</keyword>
<feature type="chain" id="PRO_0000322310" description="Small ribosomal subunit protein uS4">
    <location>
        <begin position="1"/>
        <end position="206"/>
    </location>
</feature>
<feature type="domain" description="S4 RNA-binding" evidence="1">
    <location>
        <begin position="96"/>
        <end position="161"/>
    </location>
</feature>
<sequence>MARYLGPKCKLSRREGCDLLLKSGVRDHKSKCKSEKLPGQHGDKKPRLNSYGIQLREKQKIRRLYGILEKQFRNYYKKAARQKGSTGENLMALLERRLDNVVYRMGFASTRAEARQLVAHKAILVNDKVVNVPSFLVNPGDTVSVRQKAKNQGRIQAALALSEQRAPCDWITVDTGSFKGTFSTAPTLMDLSSDYNVNLVVELYSK</sequence>
<proteinExistence type="inferred from homology"/>
<gene>
    <name evidence="1" type="primary">rpsD</name>
    <name type="ordered locus">LPC_2991</name>
</gene>
<evidence type="ECO:0000255" key="1">
    <source>
        <dbReference type="HAMAP-Rule" id="MF_01306"/>
    </source>
</evidence>
<evidence type="ECO:0000305" key="2"/>
<dbReference type="EMBL" id="CP000675">
    <property type="protein sequence ID" value="ABQ56892.1"/>
    <property type="molecule type" value="Genomic_DNA"/>
</dbReference>
<dbReference type="RefSeq" id="WP_010946102.1">
    <property type="nucleotide sequence ID" value="NZ_JAPMSS010000006.1"/>
</dbReference>
<dbReference type="SMR" id="A5IHP2"/>
<dbReference type="GeneID" id="57034356"/>
<dbReference type="KEGG" id="lpc:LPC_2991"/>
<dbReference type="HOGENOM" id="CLU_092403_0_2_6"/>
<dbReference type="GO" id="GO:0015935">
    <property type="term" value="C:small ribosomal subunit"/>
    <property type="evidence" value="ECO:0007669"/>
    <property type="project" value="InterPro"/>
</dbReference>
<dbReference type="GO" id="GO:0019843">
    <property type="term" value="F:rRNA binding"/>
    <property type="evidence" value="ECO:0007669"/>
    <property type="project" value="UniProtKB-UniRule"/>
</dbReference>
<dbReference type="GO" id="GO:0003735">
    <property type="term" value="F:structural constituent of ribosome"/>
    <property type="evidence" value="ECO:0007669"/>
    <property type="project" value="InterPro"/>
</dbReference>
<dbReference type="GO" id="GO:0042274">
    <property type="term" value="P:ribosomal small subunit biogenesis"/>
    <property type="evidence" value="ECO:0007669"/>
    <property type="project" value="TreeGrafter"/>
</dbReference>
<dbReference type="GO" id="GO:0006412">
    <property type="term" value="P:translation"/>
    <property type="evidence" value="ECO:0007669"/>
    <property type="project" value="UniProtKB-UniRule"/>
</dbReference>
<dbReference type="CDD" id="cd00165">
    <property type="entry name" value="S4"/>
    <property type="match status" value="1"/>
</dbReference>
<dbReference type="FunFam" id="1.10.1050.10:FF:000001">
    <property type="entry name" value="30S ribosomal protein S4"/>
    <property type="match status" value="1"/>
</dbReference>
<dbReference type="FunFam" id="3.10.290.10:FF:000001">
    <property type="entry name" value="30S ribosomal protein S4"/>
    <property type="match status" value="1"/>
</dbReference>
<dbReference type="Gene3D" id="1.10.1050.10">
    <property type="entry name" value="Ribosomal Protein S4 Delta 41, Chain A, domain 1"/>
    <property type="match status" value="1"/>
</dbReference>
<dbReference type="Gene3D" id="3.10.290.10">
    <property type="entry name" value="RNA-binding S4 domain"/>
    <property type="match status" value="1"/>
</dbReference>
<dbReference type="HAMAP" id="MF_01306_B">
    <property type="entry name" value="Ribosomal_uS4_B"/>
    <property type="match status" value="1"/>
</dbReference>
<dbReference type="InterPro" id="IPR022801">
    <property type="entry name" value="Ribosomal_uS4"/>
</dbReference>
<dbReference type="InterPro" id="IPR005709">
    <property type="entry name" value="Ribosomal_uS4_bac-type"/>
</dbReference>
<dbReference type="InterPro" id="IPR018079">
    <property type="entry name" value="Ribosomal_uS4_CS"/>
</dbReference>
<dbReference type="InterPro" id="IPR001912">
    <property type="entry name" value="Ribosomal_uS4_N"/>
</dbReference>
<dbReference type="InterPro" id="IPR002942">
    <property type="entry name" value="S4_RNA-bd"/>
</dbReference>
<dbReference type="InterPro" id="IPR036986">
    <property type="entry name" value="S4_RNA-bd_sf"/>
</dbReference>
<dbReference type="NCBIfam" id="NF003717">
    <property type="entry name" value="PRK05327.1"/>
    <property type="match status" value="1"/>
</dbReference>
<dbReference type="NCBIfam" id="TIGR01017">
    <property type="entry name" value="rpsD_bact"/>
    <property type="match status" value="1"/>
</dbReference>
<dbReference type="PANTHER" id="PTHR11831">
    <property type="entry name" value="30S 40S RIBOSOMAL PROTEIN"/>
    <property type="match status" value="1"/>
</dbReference>
<dbReference type="PANTHER" id="PTHR11831:SF4">
    <property type="entry name" value="SMALL RIBOSOMAL SUBUNIT PROTEIN US4M"/>
    <property type="match status" value="1"/>
</dbReference>
<dbReference type="Pfam" id="PF00163">
    <property type="entry name" value="Ribosomal_S4"/>
    <property type="match status" value="1"/>
</dbReference>
<dbReference type="Pfam" id="PF01479">
    <property type="entry name" value="S4"/>
    <property type="match status" value="1"/>
</dbReference>
<dbReference type="SMART" id="SM01390">
    <property type="entry name" value="Ribosomal_S4"/>
    <property type="match status" value="1"/>
</dbReference>
<dbReference type="SMART" id="SM00363">
    <property type="entry name" value="S4"/>
    <property type="match status" value="1"/>
</dbReference>
<dbReference type="SUPFAM" id="SSF55174">
    <property type="entry name" value="Alpha-L RNA-binding motif"/>
    <property type="match status" value="1"/>
</dbReference>
<dbReference type="PROSITE" id="PS00632">
    <property type="entry name" value="RIBOSOMAL_S4"/>
    <property type="match status" value="1"/>
</dbReference>
<dbReference type="PROSITE" id="PS50889">
    <property type="entry name" value="S4"/>
    <property type="match status" value="1"/>
</dbReference>
<accession>A5IHP2</accession>
<protein>
    <recommendedName>
        <fullName evidence="1">Small ribosomal subunit protein uS4</fullName>
    </recommendedName>
    <alternativeName>
        <fullName evidence="2">30S ribosomal protein S4</fullName>
    </alternativeName>
</protein>
<comment type="function">
    <text evidence="1">One of the primary rRNA binding proteins, it binds directly to 16S rRNA where it nucleates assembly of the body of the 30S subunit.</text>
</comment>
<comment type="function">
    <text evidence="1">With S5 and S12 plays an important role in translational accuracy.</text>
</comment>
<comment type="subunit">
    <text evidence="1">Part of the 30S ribosomal subunit. Contacts protein S5. The interaction surface between S4 and S5 is involved in control of translational fidelity.</text>
</comment>
<comment type="similarity">
    <text evidence="1">Belongs to the universal ribosomal protein uS4 family.</text>
</comment>
<reference key="1">
    <citation type="submission" date="2006-11" db="EMBL/GenBank/DDBJ databases">
        <title>Identification and characterization of a new conjugation/ type IVA secretion system (trb/tra) of L. pneumophila Corby localized on a mobile genomic island.</title>
        <authorList>
            <person name="Gloeckner G."/>
            <person name="Albert-Weissenberger C."/>
            <person name="Weinmann E."/>
            <person name="Jacobi S."/>
            <person name="Schunder E."/>
            <person name="Steinert M."/>
            <person name="Buchrieser C."/>
            <person name="Hacker J."/>
            <person name="Heuner K."/>
        </authorList>
    </citation>
    <scope>NUCLEOTIDE SEQUENCE [LARGE SCALE GENOMIC DNA]</scope>
    <source>
        <strain>Corby</strain>
    </source>
</reference>